<name>ODO2_STAAM</name>
<comment type="function">
    <text evidence="2">E2 component of the 2-oxoglutarate dehydrogenase (OGDH) complex which catalyzes the second step in the conversion of 2-oxoglutarate to succinyl-CoA and CO(2).</text>
</comment>
<comment type="catalytic activity">
    <reaction evidence="2">
        <text>N(6)-[(R)-dihydrolipoyl]-L-lysyl-[protein] + succinyl-CoA = N(6)-[(R)-S(8)-succinyldihydrolipoyl]-L-lysyl-[protein] + CoA</text>
        <dbReference type="Rhea" id="RHEA:15213"/>
        <dbReference type="Rhea" id="RHEA-COMP:10475"/>
        <dbReference type="Rhea" id="RHEA-COMP:20092"/>
        <dbReference type="ChEBI" id="CHEBI:57287"/>
        <dbReference type="ChEBI" id="CHEBI:57292"/>
        <dbReference type="ChEBI" id="CHEBI:83100"/>
        <dbReference type="ChEBI" id="CHEBI:83120"/>
        <dbReference type="EC" id="2.3.1.61"/>
    </reaction>
</comment>
<comment type="cofactor">
    <cofactor evidence="1">
        <name>(R)-lipoate</name>
        <dbReference type="ChEBI" id="CHEBI:83088"/>
    </cofactor>
    <text evidence="1">Binds 1 lipoyl cofactor covalently.</text>
</comment>
<comment type="pathway">
    <text>Amino-acid degradation; L-lysine degradation via saccharopine pathway; glutaryl-CoA from L-lysine: step 6/6.</text>
</comment>
<comment type="subunit">
    <text evidence="2">Forms a 24-polypeptide structural core with octahedral symmetry. Part of the 2-oxoglutarate dehydrogenase (OGDH) complex composed of E1 (2-oxoglutarate dehydrogenase), E2 (dihydrolipoamide succinyltransferase) and E3 (dihydrolipoamide dehydrogenase); the complex contains multiple copies of the three enzymatic components (E1, E2 and E3).</text>
</comment>
<comment type="similarity">
    <text evidence="6">Belongs to the 2-oxoacid dehydrogenase family.</text>
</comment>
<keyword id="KW-0012">Acyltransferase</keyword>
<keyword id="KW-0450">Lipoyl</keyword>
<keyword id="KW-0808">Transferase</keyword>
<keyword id="KW-0816">Tricarboxylic acid cycle</keyword>
<evidence type="ECO:0000250" key="1"/>
<evidence type="ECO:0000250" key="2">
    <source>
        <dbReference type="UniProtKB" id="P0AFG6"/>
    </source>
</evidence>
<evidence type="ECO:0000255" key="3">
    <source>
        <dbReference type="PROSITE-ProRule" id="PRU01066"/>
    </source>
</evidence>
<evidence type="ECO:0000255" key="4">
    <source>
        <dbReference type="PROSITE-ProRule" id="PRU01170"/>
    </source>
</evidence>
<evidence type="ECO:0000256" key="5">
    <source>
        <dbReference type="SAM" id="MobiDB-lite"/>
    </source>
</evidence>
<evidence type="ECO:0000305" key="6"/>
<proteinExistence type="inferred from homology"/>
<sequence>MPEVKVPELAESITEGTIAEWLKNVGDSVEKGEAILELETDKVNVEVVSEEAGVLSEQLASEGDTVEVGQAIAIIGEGSGNASKENSNDNTPQQNEETNNKKEETTNNSVDKAEVNQANDDNQQRINATPSARRYARENGVNLAEVSPKTNDVVRKEDIDKKQQAPASTQTTQQAPAKEEKKYNQYPTKPVIREKMSRRKKTAAKKLLEVSNNTAMLTTFNEVDMTNVMELRKRKKEQFMKDHDGTKLGFMSFFTKASVAALKKYPEVNAEIDGDDMITKQYYDIGVAVSTDDGLLVPFVRDCDKKNFAEIEAEIANLAVKAREKKLGLDDMVNGSFTITNGGIFGSMMSTPIINGNQAAILGMHSIITRPIAIDQDTIENRPMMYIALSYDHRIIDGKEAVGFLKTIKELIENPEDLLLES</sequence>
<protein>
    <recommendedName>
        <fullName>Dihydrolipoyllysine-residue succinyltransferase component of 2-oxoglutarate dehydrogenase complex</fullName>
        <ecNumber evidence="2">2.3.1.61</ecNumber>
    </recommendedName>
    <alternativeName>
        <fullName>2-oxoglutarate dehydrogenase complex component E2</fullName>
        <shortName>OGDC-E2</shortName>
    </alternativeName>
    <alternativeName>
        <fullName>Dihydrolipoamide succinyltransferase component of 2-oxoglutarate dehydrogenase complex</fullName>
    </alternativeName>
</protein>
<organism>
    <name type="scientific">Staphylococcus aureus (strain Mu50 / ATCC 700699)</name>
    <dbReference type="NCBI Taxonomy" id="158878"/>
    <lineage>
        <taxon>Bacteria</taxon>
        <taxon>Bacillati</taxon>
        <taxon>Bacillota</taxon>
        <taxon>Bacilli</taxon>
        <taxon>Bacillales</taxon>
        <taxon>Staphylococcaceae</taxon>
        <taxon>Staphylococcus</taxon>
    </lineage>
</organism>
<feature type="chain" id="PRO_0000288102" description="Dihydrolipoyllysine-residue succinyltransferase component of 2-oxoglutarate dehydrogenase complex">
    <location>
        <begin position="1"/>
        <end position="422"/>
    </location>
</feature>
<feature type="domain" description="Lipoyl-binding" evidence="3">
    <location>
        <begin position="1"/>
        <end position="76"/>
    </location>
</feature>
<feature type="domain" description="Peripheral subunit-binding (PSBD)" evidence="4">
    <location>
        <begin position="127"/>
        <end position="163"/>
    </location>
</feature>
<feature type="region of interest" description="Disordered" evidence="5">
    <location>
        <begin position="77"/>
        <end position="184"/>
    </location>
</feature>
<feature type="compositionally biased region" description="Polar residues" evidence="5">
    <location>
        <begin position="80"/>
        <end position="94"/>
    </location>
</feature>
<feature type="compositionally biased region" description="Polar residues" evidence="5">
    <location>
        <begin position="116"/>
        <end position="130"/>
    </location>
</feature>
<feature type="compositionally biased region" description="Basic and acidic residues" evidence="5">
    <location>
        <begin position="152"/>
        <end position="163"/>
    </location>
</feature>
<feature type="compositionally biased region" description="Low complexity" evidence="5">
    <location>
        <begin position="164"/>
        <end position="176"/>
    </location>
</feature>
<feature type="active site" evidence="2">
    <location>
        <position position="393"/>
    </location>
</feature>
<feature type="active site" evidence="2">
    <location>
        <position position="397"/>
    </location>
</feature>
<feature type="modified residue" description="N6-lipoyllysine" evidence="3">
    <location>
        <position position="42"/>
    </location>
</feature>
<reference key="1">
    <citation type="journal article" date="2001" name="Lancet">
        <title>Whole genome sequencing of meticillin-resistant Staphylococcus aureus.</title>
        <authorList>
            <person name="Kuroda M."/>
            <person name="Ohta T."/>
            <person name="Uchiyama I."/>
            <person name="Baba T."/>
            <person name="Yuzawa H."/>
            <person name="Kobayashi I."/>
            <person name="Cui L."/>
            <person name="Oguchi A."/>
            <person name="Aoki K."/>
            <person name="Nagai Y."/>
            <person name="Lian J.-Q."/>
            <person name="Ito T."/>
            <person name="Kanamori M."/>
            <person name="Matsumaru H."/>
            <person name="Maruyama A."/>
            <person name="Murakami H."/>
            <person name="Hosoyama A."/>
            <person name="Mizutani-Ui Y."/>
            <person name="Takahashi N.K."/>
            <person name="Sawano T."/>
            <person name="Inoue R."/>
            <person name="Kaito C."/>
            <person name="Sekimizu K."/>
            <person name="Hirakawa H."/>
            <person name="Kuhara S."/>
            <person name="Goto S."/>
            <person name="Yabuzaki J."/>
            <person name="Kanehisa M."/>
            <person name="Yamashita A."/>
            <person name="Oshima K."/>
            <person name="Furuya K."/>
            <person name="Yoshino C."/>
            <person name="Shiba T."/>
            <person name="Hattori M."/>
            <person name="Ogasawara N."/>
            <person name="Hayashi H."/>
            <person name="Hiramatsu K."/>
        </authorList>
    </citation>
    <scope>NUCLEOTIDE SEQUENCE [LARGE SCALE GENOMIC DNA]</scope>
    <source>
        <strain>Mu50 / ATCC 700699</strain>
    </source>
</reference>
<accession>Q99U75</accession>
<gene>
    <name type="primary">odhB</name>
    <name type="synonym">sucB</name>
    <name type="ordered locus">SAV1412</name>
</gene>
<dbReference type="EC" id="2.3.1.61" evidence="2"/>
<dbReference type="EMBL" id="BA000017">
    <property type="protein sequence ID" value="BAB57574.1"/>
    <property type="molecule type" value="Genomic_DNA"/>
</dbReference>
<dbReference type="RefSeq" id="WP_001115439.1">
    <property type="nucleotide sequence ID" value="NC_002758.2"/>
</dbReference>
<dbReference type="SMR" id="Q99U75"/>
<dbReference type="KEGG" id="sav:SAV1412"/>
<dbReference type="HOGENOM" id="CLU_016733_0_0_9"/>
<dbReference type="PhylomeDB" id="Q99U75"/>
<dbReference type="UniPathway" id="UPA00868">
    <property type="reaction ID" value="UER00840"/>
</dbReference>
<dbReference type="Proteomes" id="UP000002481">
    <property type="component" value="Chromosome"/>
</dbReference>
<dbReference type="GO" id="GO:0005829">
    <property type="term" value="C:cytosol"/>
    <property type="evidence" value="ECO:0007669"/>
    <property type="project" value="TreeGrafter"/>
</dbReference>
<dbReference type="GO" id="GO:0045252">
    <property type="term" value="C:oxoglutarate dehydrogenase complex"/>
    <property type="evidence" value="ECO:0007669"/>
    <property type="project" value="InterPro"/>
</dbReference>
<dbReference type="GO" id="GO:0004149">
    <property type="term" value="F:dihydrolipoyllysine-residue succinyltransferase activity"/>
    <property type="evidence" value="ECO:0007669"/>
    <property type="project" value="UniProtKB-EC"/>
</dbReference>
<dbReference type="GO" id="GO:0033512">
    <property type="term" value="P:L-lysine catabolic process to acetyl-CoA via saccharopine"/>
    <property type="evidence" value="ECO:0007669"/>
    <property type="project" value="UniProtKB-UniPathway"/>
</dbReference>
<dbReference type="GO" id="GO:0006099">
    <property type="term" value="P:tricarboxylic acid cycle"/>
    <property type="evidence" value="ECO:0007669"/>
    <property type="project" value="UniProtKB-KW"/>
</dbReference>
<dbReference type="CDD" id="cd06849">
    <property type="entry name" value="lipoyl_domain"/>
    <property type="match status" value="1"/>
</dbReference>
<dbReference type="FunFam" id="3.30.559.10:FF:000007">
    <property type="entry name" value="Dihydrolipoamide acetyltransferase component of pyruvate dehydrogenase complex"/>
    <property type="match status" value="1"/>
</dbReference>
<dbReference type="Gene3D" id="2.40.50.100">
    <property type="match status" value="1"/>
</dbReference>
<dbReference type="Gene3D" id="3.30.559.10">
    <property type="entry name" value="Chloramphenicol acetyltransferase-like domain"/>
    <property type="match status" value="1"/>
</dbReference>
<dbReference type="Gene3D" id="4.10.320.10">
    <property type="entry name" value="E3-binding domain"/>
    <property type="match status" value="1"/>
</dbReference>
<dbReference type="InterPro" id="IPR003016">
    <property type="entry name" value="2-oxoA_DH_lipoyl-BS"/>
</dbReference>
<dbReference type="InterPro" id="IPR050537">
    <property type="entry name" value="2-oxoacid_dehydrogenase"/>
</dbReference>
<dbReference type="InterPro" id="IPR001078">
    <property type="entry name" value="2-oxoacid_DH_actylTfrase"/>
</dbReference>
<dbReference type="InterPro" id="IPR000089">
    <property type="entry name" value="Biotin_lipoyl"/>
</dbReference>
<dbReference type="InterPro" id="IPR023213">
    <property type="entry name" value="CAT-like_dom_sf"/>
</dbReference>
<dbReference type="InterPro" id="IPR036625">
    <property type="entry name" value="E3-bd_dom_sf"/>
</dbReference>
<dbReference type="InterPro" id="IPR004167">
    <property type="entry name" value="PSBD"/>
</dbReference>
<dbReference type="InterPro" id="IPR011053">
    <property type="entry name" value="Single_hybrid_motif"/>
</dbReference>
<dbReference type="InterPro" id="IPR006255">
    <property type="entry name" value="SucB"/>
</dbReference>
<dbReference type="NCBIfam" id="NF004309">
    <property type="entry name" value="PRK05704.1"/>
    <property type="match status" value="1"/>
</dbReference>
<dbReference type="NCBIfam" id="TIGR01347">
    <property type="entry name" value="sucB"/>
    <property type="match status" value="1"/>
</dbReference>
<dbReference type="PANTHER" id="PTHR43416:SF5">
    <property type="entry name" value="DIHYDROLIPOYLLYSINE-RESIDUE SUCCINYLTRANSFERASE COMPONENT OF 2-OXOGLUTARATE DEHYDROGENASE COMPLEX, MITOCHONDRIAL"/>
    <property type="match status" value="1"/>
</dbReference>
<dbReference type="PANTHER" id="PTHR43416">
    <property type="entry name" value="DIHYDROLIPOYLLYSINE-RESIDUE SUCCINYLTRANSFERASE COMPONENT OF 2-OXOGLUTARATE DEHYDROGENASE COMPLEX, MITOCHONDRIAL-RELATED"/>
    <property type="match status" value="1"/>
</dbReference>
<dbReference type="Pfam" id="PF00198">
    <property type="entry name" value="2-oxoacid_dh"/>
    <property type="match status" value="1"/>
</dbReference>
<dbReference type="Pfam" id="PF00364">
    <property type="entry name" value="Biotin_lipoyl"/>
    <property type="match status" value="1"/>
</dbReference>
<dbReference type="Pfam" id="PF02817">
    <property type="entry name" value="E3_binding"/>
    <property type="match status" value="1"/>
</dbReference>
<dbReference type="SUPFAM" id="SSF52777">
    <property type="entry name" value="CoA-dependent acyltransferases"/>
    <property type="match status" value="1"/>
</dbReference>
<dbReference type="SUPFAM" id="SSF51230">
    <property type="entry name" value="Single hybrid motif"/>
    <property type="match status" value="1"/>
</dbReference>
<dbReference type="PROSITE" id="PS50968">
    <property type="entry name" value="BIOTINYL_LIPOYL"/>
    <property type="match status" value="1"/>
</dbReference>
<dbReference type="PROSITE" id="PS00189">
    <property type="entry name" value="LIPOYL"/>
    <property type="match status" value="1"/>
</dbReference>
<dbReference type="PROSITE" id="PS51826">
    <property type="entry name" value="PSBD"/>
    <property type="match status" value="1"/>
</dbReference>